<proteinExistence type="evidence at transcript level"/>
<name>ACES_CHICK</name>
<evidence type="ECO:0000250" key="1"/>
<evidence type="ECO:0000255" key="2"/>
<evidence type="ECO:0000255" key="3">
    <source>
        <dbReference type="PROSITE-ProRule" id="PRU10039"/>
    </source>
</evidence>
<evidence type="ECO:0000256" key="4">
    <source>
        <dbReference type="SAM" id="MobiDB-lite"/>
    </source>
</evidence>
<evidence type="ECO:0000305" key="5"/>
<keyword id="KW-1003">Cell membrane</keyword>
<keyword id="KW-1015">Disulfide bond</keyword>
<keyword id="KW-0325">Glycoprotein</keyword>
<keyword id="KW-0378">Hydrolase</keyword>
<keyword id="KW-0472">Membrane</keyword>
<keyword id="KW-0531">Neurotransmitter degradation</keyword>
<keyword id="KW-1185">Reference proteome</keyword>
<keyword id="KW-0964">Secreted</keyword>
<keyword id="KW-0719">Serine esterase</keyword>
<keyword id="KW-0732">Signal</keyword>
<keyword id="KW-0770">Synapse</keyword>
<dbReference type="EC" id="3.1.1.7"/>
<dbReference type="EMBL" id="U03472">
    <property type="protein sequence ID" value="AAA60456.1"/>
    <property type="molecule type" value="mRNA"/>
</dbReference>
<dbReference type="PIR" id="S47639">
    <property type="entry name" value="S47639"/>
</dbReference>
<dbReference type="SMR" id="P36196"/>
<dbReference type="FunCoup" id="P36196">
    <property type="interactions" value="110"/>
</dbReference>
<dbReference type="STRING" id="9031.ENSGALP00000074034"/>
<dbReference type="ChEMBL" id="CHEMBL3227914"/>
<dbReference type="DrugCentral" id="P36196"/>
<dbReference type="ESTHER" id="chick-ACHE">
    <property type="family name" value="ACHE"/>
</dbReference>
<dbReference type="GlyCosmos" id="P36196">
    <property type="glycosylation" value="4 sites, No reported glycans"/>
</dbReference>
<dbReference type="GlyGen" id="P36196">
    <property type="glycosylation" value="5 sites"/>
</dbReference>
<dbReference type="VEuPathDB" id="HostDB:geneid_396388"/>
<dbReference type="InParanoid" id="P36196"/>
<dbReference type="OrthoDB" id="9000293at2759"/>
<dbReference type="PhylomeDB" id="P36196"/>
<dbReference type="PRO" id="PR:P36196"/>
<dbReference type="Proteomes" id="UP000000539">
    <property type="component" value="Unassembled WGS sequence"/>
</dbReference>
<dbReference type="GO" id="GO:0005615">
    <property type="term" value="C:extracellular space"/>
    <property type="evidence" value="ECO:0000318"/>
    <property type="project" value="GO_Central"/>
</dbReference>
<dbReference type="GO" id="GO:0005886">
    <property type="term" value="C:plasma membrane"/>
    <property type="evidence" value="ECO:0000318"/>
    <property type="project" value="GO_Central"/>
</dbReference>
<dbReference type="GO" id="GO:0045202">
    <property type="term" value="C:synapse"/>
    <property type="evidence" value="ECO:0007669"/>
    <property type="project" value="UniProtKB-SubCell"/>
</dbReference>
<dbReference type="GO" id="GO:0003990">
    <property type="term" value="F:acetylcholinesterase activity"/>
    <property type="evidence" value="ECO:0000318"/>
    <property type="project" value="GO_Central"/>
</dbReference>
<dbReference type="GO" id="GO:0006581">
    <property type="term" value="P:acetylcholine catabolic process"/>
    <property type="evidence" value="ECO:0000318"/>
    <property type="project" value="GO_Central"/>
</dbReference>
<dbReference type="GO" id="GO:0019695">
    <property type="term" value="P:choline metabolic process"/>
    <property type="evidence" value="ECO:0000318"/>
    <property type="project" value="GO_Central"/>
</dbReference>
<dbReference type="GO" id="GO:0010842">
    <property type="term" value="P:retina layer formation"/>
    <property type="evidence" value="ECO:0000315"/>
    <property type="project" value="AgBase"/>
</dbReference>
<dbReference type="FunFam" id="3.40.50.1820:FF:001117">
    <property type="entry name" value="Acetylcholinesterase"/>
    <property type="match status" value="1"/>
</dbReference>
<dbReference type="Gene3D" id="3.40.50.1820">
    <property type="entry name" value="alpha/beta hydrolase"/>
    <property type="match status" value="2"/>
</dbReference>
<dbReference type="InterPro" id="IPR029058">
    <property type="entry name" value="AB_hydrolase_fold"/>
</dbReference>
<dbReference type="InterPro" id="IPR050654">
    <property type="entry name" value="AChE-related_enzymes"/>
</dbReference>
<dbReference type="InterPro" id="IPR014788">
    <property type="entry name" value="AChE_tetra"/>
</dbReference>
<dbReference type="InterPro" id="IPR002018">
    <property type="entry name" value="CarbesteraseB"/>
</dbReference>
<dbReference type="InterPro" id="IPR019826">
    <property type="entry name" value="Carboxylesterase_B_AS"/>
</dbReference>
<dbReference type="InterPro" id="IPR019819">
    <property type="entry name" value="Carboxylesterase_B_CS"/>
</dbReference>
<dbReference type="InterPro" id="IPR000997">
    <property type="entry name" value="Cholinesterase"/>
</dbReference>
<dbReference type="PANTHER" id="PTHR43918">
    <property type="entry name" value="ACETYLCHOLINESTERASE"/>
    <property type="match status" value="1"/>
</dbReference>
<dbReference type="PANTHER" id="PTHR43918:SF11">
    <property type="entry name" value="ACETYLCHOLINESTERASE"/>
    <property type="match status" value="1"/>
</dbReference>
<dbReference type="Pfam" id="PF08674">
    <property type="entry name" value="AChE_tetra"/>
    <property type="match status" value="1"/>
</dbReference>
<dbReference type="Pfam" id="PF00135">
    <property type="entry name" value="COesterase"/>
    <property type="match status" value="2"/>
</dbReference>
<dbReference type="PRINTS" id="PR00878">
    <property type="entry name" value="CHOLNESTRASE"/>
</dbReference>
<dbReference type="SUPFAM" id="SSF53474">
    <property type="entry name" value="alpha/beta-Hydrolases"/>
    <property type="match status" value="2"/>
</dbReference>
<dbReference type="PROSITE" id="PS00122">
    <property type="entry name" value="CARBOXYLESTERASE_B_1"/>
    <property type="match status" value="1"/>
</dbReference>
<dbReference type="PROSITE" id="PS00941">
    <property type="entry name" value="CARBOXYLESTERASE_B_2"/>
    <property type="match status" value="1"/>
</dbReference>
<protein>
    <recommendedName>
        <fullName>Acetylcholinesterase</fullName>
        <shortName>AChE</shortName>
        <ecNumber>3.1.1.7</ecNumber>
    </recommendedName>
</protein>
<comment type="function">
    <text>Terminates signal transduction at the neuromuscular junction by rapid hydrolysis of the acetylcholine released into the synaptic cleft.</text>
</comment>
<comment type="catalytic activity">
    <reaction>
        <text>acetylcholine + H2O = choline + acetate + H(+)</text>
        <dbReference type="Rhea" id="RHEA:17561"/>
        <dbReference type="ChEBI" id="CHEBI:15354"/>
        <dbReference type="ChEBI" id="CHEBI:15355"/>
        <dbReference type="ChEBI" id="CHEBI:15377"/>
        <dbReference type="ChEBI" id="CHEBI:15378"/>
        <dbReference type="ChEBI" id="CHEBI:30089"/>
        <dbReference type="EC" id="3.1.1.7"/>
    </reaction>
</comment>
<comment type="subunit">
    <text>Oligomer composed of disulfide-linked homodimers.</text>
</comment>
<comment type="subcellular location">
    <subcellularLocation>
        <location>Synapse</location>
    </subcellularLocation>
    <subcellularLocation>
        <location>Secreted</location>
    </subcellularLocation>
    <subcellularLocation>
        <location evidence="1">Cell membrane</location>
        <topology evidence="1">Peripheral membrane protein</topology>
    </subcellularLocation>
</comment>
<comment type="similarity">
    <text evidence="5">Belongs to the type-B carboxylesterase/lipase family.</text>
</comment>
<feature type="signal peptide" evidence="2">
    <location>
        <begin position="1"/>
        <end position="19"/>
    </location>
</feature>
<feature type="chain" id="PRO_0000008591" description="Acetylcholinesterase">
    <location>
        <begin position="20"/>
        <end position="767"/>
    </location>
</feature>
<feature type="region of interest" description="Disordered" evidence="4">
    <location>
        <begin position="401"/>
        <end position="504"/>
    </location>
</feature>
<feature type="active site" description="Acyl-ester intermediate" evidence="3">
    <location>
        <position position="227"/>
    </location>
</feature>
<feature type="active site" description="Charge relay system" evidence="1">
    <location>
        <position position="520"/>
    </location>
</feature>
<feature type="active site" description="Charge relay system" evidence="1">
    <location>
        <position position="633"/>
    </location>
</feature>
<feature type="glycosylation site" description="N-linked (GlcNAc...) asparagine" evidence="2">
    <location>
        <position position="285"/>
    </location>
</feature>
<feature type="glycosylation site" description="N-linked (GlcNAc...) asparagine" evidence="2">
    <location>
        <position position="536"/>
    </location>
</feature>
<feature type="glycosylation site" description="N-linked (GlcNAc...) asparagine" evidence="2">
    <location>
        <position position="650"/>
    </location>
</feature>
<feature type="glycosylation site" description="N-linked (GlcNAc...) asparagine" evidence="2">
    <location>
        <position position="725"/>
    </location>
</feature>
<feature type="disulfide bond" evidence="1">
    <location>
        <begin position="94"/>
        <end position="121"/>
    </location>
</feature>
<feature type="disulfide bond" evidence="1">
    <location>
        <begin position="281"/>
        <end position="292"/>
    </location>
</feature>
<feature type="disulfide bond" evidence="1">
    <location>
        <begin position="595"/>
        <end position="713"/>
    </location>
</feature>
<feature type="disulfide bond" description="Interchain" evidence="1">
    <location>
        <position position="764"/>
    </location>
</feature>
<sequence length="767" mass="83020">MAPLFLLLLLLLSPSPTSAHRFAYSAPNRPEVRTTTGSVRGLLIPAGPSGSTAAAFLGIPFAVPPLGPLRFRPPLPIPTPWTGIRDADSQPFACYQMVDTTFPGFQGSEMWNPNREMSEDCLYLNVWTQKGDPTEPPVLVWIYGGGFTGGSVSLDVYDGRYLAAAEEAVVVSMNYRVGSLGFLALAGHRDAPGNVGLWDQRLALQWVRDNAEAFGGDPDLITLFGESAGAASVGFHLLSPHSKGLFRRAVLQSGSPNGPWATIGAAEGRRRAAALGRAVGCPYGNETEFLGCLRGKEAADVLEGEGVVMPPQSVFRFAFVPVVDGDFVVDSPDVALWGDYGVKGGEGGHGVEGGDGGYGVKGGDGVKGGYGGGYGARGVREGDGDGGYGVKEGLREGYGVKEGYGVEGDGANAYGARVPPRPHRDETPPDAYGAKGSADAYGAKAAPRPHRDETSPDAYGAKMPPRPHRDEASPDTYGAKMPPRPHRDETSPDAYGAKMPPRPHRAGGEVEVLLGAVRVEGSYFLVYGVPGFGKDNESLISREEFLGGVRMGVPQATELAAEAVVLHYTDWLDADNPVKNREALDDIVGDHNVVCPLMAFAQRWAQRGGKVYAYLFDHRSSTLLWPSWMGVPHGYEIEFVFGLPLEPRNNYTREEVELSRRIMRYWGNFARTGDPNGGVGGPRWPPYTPSGQRYAHLNARPLSVGHGLRTQICAFWTRFLPKLLNATGPPEDAEREWRLEFHRWSSYMGRWRTQFEHYSRQQPCATL</sequence>
<reference key="1">
    <citation type="journal article" date="1994" name="Biochim. Biophys. Acta">
        <title>Cloning and analysis of chicken acetylcholinesterase transcripts from muscle and brain.</title>
        <authorList>
            <person name="Randall W.R."/>
            <person name="Rimer M."/>
            <person name="Gough N.R."/>
        </authorList>
    </citation>
    <scope>NUCLEOTIDE SEQUENCE [MRNA]</scope>
    <source>
        <tissue>Muscle</tissue>
    </source>
</reference>
<gene>
    <name type="primary">ACHE</name>
</gene>
<accession>P36196</accession>
<organism>
    <name type="scientific">Gallus gallus</name>
    <name type="common">Chicken</name>
    <dbReference type="NCBI Taxonomy" id="9031"/>
    <lineage>
        <taxon>Eukaryota</taxon>
        <taxon>Metazoa</taxon>
        <taxon>Chordata</taxon>
        <taxon>Craniata</taxon>
        <taxon>Vertebrata</taxon>
        <taxon>Euteleostomi</taxon>
        <taxon>Archelosauria</taxon>
        <taxon>Archosauria</taxon>
        <taxon>Dinosauria</taxon>
        <taxon>Saurischia</taxon>
        <taxon>Theropoda</taxon>
        <taxon>Coelurosauria</taxon>
        <taxon>Aves</taxon>
        <taxon>Neognathae</taxon>
        <taxon>Galloanserae</taxon>
        <taxon>Galliformes</taxon>
        <taxon>Phasianidae</taxon>
        <taxon>Phasianinae</taxon>
        <taxon>Gallus</taxon>
    </lineage>
</organism>